<accession>P41538</accession>
<protein>
    <recommendedName>
        <fullName>Diuretic hormone</fullName>
        <shortName>DH</shortName>
    </recommendedName>
    <alternativeName>
        <fullName>Diuretic peptide</fullName>
        <shortName>DP</shortName>
    </alternativeName>
</protein>
<evidence type="ECO:0000269" key="1">
    <source>
    </source>
</evidence>
<evidence type="ECO:0000305" key="2"/>
<sequence>TGSGPSLSIVNPLDVLRQRLLLEIARRRMRQSQDQIQANREILQTI</sequence>
<keyword id="KW-0027">Amidation</keyword>
<keyword id="KW-0903">Direct protein sequencing</keyword>
<keyword id="KW-0372">Hormone</keyword>
<keyword id="KW-0964">Secreted</keyword>
<proteinExistence type="evidence at protein level"/>
<reference key="1">
    <citation type="journal article" date="1992" name="Regul. Pept.">
        <title>Isolation, characterization and biological activity of a CRF-related diuretic peptide from Periplaneta americana L.</title>
        <authorList>
            <person name="Kay I."/>
            <person name="Patel M."/>
            <person name="Coast G.M."/>
            <person name="Totty N.F."/>
            <person name="Mallet A.I."/>
            <person name="Goldsworthy G.J."/>
        </authorList>
    </citation>
    <scope>PROTEIN SEQUENCE</scope>
    <scope>AMIDATION AT ILE-46</scope>
</reference>
<organism>
    <name type="scientific">Periplaneta americana</name>
    <name type="common">American cockroach</name>
    <name type="synonym">Blatta americana</name>
    <dbReference type="NCBI Taxonomy" id="6978"/>
    <lineage>
        <taxon>Eukaryota</taxon>
        <taxon>Metazoa</taxon>
        <taxon>Ecdysozoa</taxon>
        <taxon>Arthropoda</taxon>
        <taxon>Hexapoda</taxon>
        <taxon>Insecta</taxon>
        <taxon>Pterygota</taxon>
        <taxon>Neoptera</taxon>
        <taxon>Polyneoptera</taxon>
        <taxon>Dictyoptera</taxon>
        <taxon>Blattodea</taxon>
        <taxon>Blattoidea</taxon>
        <taxon>Blattidae</taxon>
        <taxon>Blattinae</taxon>
        <taxon>Periplaneta</taxon>
    </lineage>
</organism>
<comment type="function">
    <text>Regulation of fluid secretion. Stimulates primary urine secretion by Malpighian tubules and causes a dose-dependent stimulation of cAMP levels in the tubules.</text>
</comment>
<comment type="subcellular location">
    <subcellularLocation>
        <location>Secreted</location>
    </subcellularLocation>
</comment>
<comment type="similarity">
    <text evidence="2">Belongs to the sauvagine/corticotropin-releasing factor/urotensin I family.</text>
</comment>
<name>DIUH_PERAM</name>
<feature type="chain" id="PRO_0000221020" description="Diuretic hormone">
    <location>
        <begin position="1"/>
        <end position="46"/>
    </location>
</feature>
<feature type="modified residue" description="Isoleucine amide" evidence="1">
    <location>
        <position position="46"/>
    </location>
</feature>
<dbReference type="PIR" id="A48542">
    <property type="entry name" value="A48542"/>
</dbReference>
<dbReference type="SMR" id="P41538"/>
<dbReference type="GO" id="GO:0005576">
    <property type="term" value="C:extracellular region"/>
    <property type="evidence" value="ECO:0007669"/>
    <property type="project" value="UniProtKB-SubCell"/>
</dbReference>
<dbReference type="GO" id="GO:0005179">
    <property type="term" value="F:hormone activity"/>
    <property type="evidence" value="ECO:0007669"/>
    <property type="project" value="UniProtKB-KW"/>
</dbReference>
<dbReference type="InterPro" id="IPR018446">
    <property type="entry name" value="Corticotropin-releasing_fac_CS"/>
</dbReference>
<dbReference type="InterPro" id="IPR000187">
    <property type="entry name" value="CRF"/>
</dbReference>
<dbReference type="Pfam" id="PF00473">
    <property type="entry name" value="CRF"/>
    <property type="match status" value="1"/>
</dbReference>
<dbReference type="SMART" id="SM00039">
    <property type="entry name" value="CRF"/>
    <property type="match status" value="1"/>
</dbReference>
<dbReference type="PROSITE" id="PS00511">
    <property type="entry name" value="CRF"/>
    <property type="match status" value="1"/>
</dbReference>